<name>MTNN_SHEB5</name>
<sequence length="236" mass="24663">MKIGIIGAMEPEVAHLIAAMTNATSQTIAGIEFIAGTLAGKDVVVTRSGIGKVAASIATTLLIEKYAPDAMINTGSAGGFVDTLAIGDIVISSEVRHHDVDVTAFGYEIGQMAQQPAAFIPAAHLVEAANKAIAQLGEVKAIEGLICTGDSFICDPVRTQAMLKNFPTMAACEMEGAAIAQVCHQFGVPFVVIRSLSDNANNDSPVDFDSYIVKAGYHSALMVMLLLEQLNPSAVK</sequence>
<gene>
    <name evidence="1" type="primary">mtnN</name>
    <name type="ordered locus">Sbal_1176</name>
</gene>
<protein>
    <recommendedName>
        <fullName evidence="1">5'-methylthioadenosine/S-adenosylhomocysteine nucleosidase</fullName>
        <shortName evidence="1">MTA/SAH nucleosidase</shortName>
        <shortName evidence="1">MTAN</shortName>
        <ecNumber evidence="1">3.2.2.9</ecNumber>
    </recommendedName>
    <alternativeName>
        <fullName evidence="1">5'-deoxyadenosine nucleosidase</fullName>
        <shortName evidence="1">DOA nucleosidase</shortName>
        <shortName evidence="1">dAdo nucleosidase</shortName>
    </alternativeName>
    <alternativeName>
        <fullName evidence="1">5'-methylthioadenosine nucleosidase</fullName>
        <shortName evidence="1">MTA nucleosidase</shortName>
    </alternativeName>
    <alternativeName>
        <fullName evidence="1">S-adenosylhomocysteine nucleosidase</fullName>
        <shortName evidence="1">AdoHcy nucleosidase</shortName>
        <shortName evidence="1">SAH nucleosidase</shortName>
        <shortName evidence="1">SRH nucleosidase</shortName>
    </alternativeName>
</protein>
<reference key="1">
    <citation type="submission" date="2007-02" db="EMBL/GenBank/DDBJ databases">
        <title>Complete sequence of chromosome of Shewanella baltica OS155.</title>
        <authorList>
            <consortium name="US DOE Joint Genome Institute"/>
            <person name="Copeland A."/>
            <person name="Lucas S."/>
            <person name="Lapidus A."/>
            <person name="Barry K."/>
            <person name="Detter J.C."/>
            <person name="Glavina del Rio T."/>
            <person name="Hammon N."/>
            <person name="Israni S."/>
            <person name="Dalin E."/>
            <person name="Tice H."/>
            <person name="Pitluck S."/>
            <person name="Sims D.R."/>
            <person name="Brettin T."/>
            <person name="Bruce D."/>
            <person name="Han C."/>
            <person name="Tapia R."/>
            <person name="Brainard J."/>
            <person name="Schmutz J."/>
            <person name="Larimer F."/>
            <person name="Land M."/>
            <person name="Hauser L."/>
            <person name="Kyrpides N."/>
            <person name="Mikhailova N."/>
            <person name="Brettar I."/>
            <person name="Klappenbach J."/>
            <person name="Konstantinidis K."/>
            <person name="Rodrigues J."/>
            <person name="Tiedje J."/>
            <person name="Richardson P."/>
        </authorList>
    </citation>
    <scope>NUCLEOTIDE SEQUENCE [LARGE SCALE GENOMIC DNA]</scope>
    <source>
        <strain>OS155 / ATCC BAA-1091</strain>
    </source>
</reference>
<feature type="chain" id="PRO_0000359340" description="5'-methylthioadenosine/S-adenosylhomocysteine nucleosidase">
    <location>
        <begin position="1"/>
        <end position="236"/>
    </location>
</feature>
<feature type="active site" description="Proton acceptor" evidence="1">
    <location>
        <position position="12"/>
    </location>
</feature>
<feature type="active site" description="Proton donor" evidence="1">
    <location>
        <position position="198"/>
    </location>
</feature>
<feature type="binding site" evidence="1">
    <location>
        <position position="78"/>
    </location>
    <ligand>
        <name>substrate</name>
    </ligand>
</feature>
<feature type="binding site" evidence="1">
    <location>
        <position position="153"/>
    </location>
    <ligand>
        <name>substrate</name>
    </ligand>
</feature>
<feature type="binding site" evidence="1">
    <location>
        <begin position="174"/>
        <end position="175"/>
    </location>
    <ligand>
        <name>substrate</name>
    </ligand>
</feature>
<evidence type="ECO:0000255" key="1">
    <source>
        <dbReference type="HAMAP-Rule" id="MF_01684"/>
    </source>
</evidence>
<keyword id="KW-0028">Amino-acid biosynthesis</keyword>
<keyword id="KW-0378">Hydrolase</keyword>
<keyword id="KW-0486">Methionine biosynthesis</keyword>
<keyword id="KW-1185">Reference proteome</keyword>
<proteinExistence type="inferred from homology"/>
<dbReference type="EC" id="3.2.2.9" evidence="1"/>
<dbReference type="EMBL" id="CP000563">
    <property type="protein sequence ID" value="ABN60694.1"/>
    <property type="molecule type" value="Genomic_DNA"/>
</dbReference>
<dbReference type="RefSeq" id="WP_011846156.1">
    <property type="nucleotide sequence ID" value="NC_009052.1"/>
</dbReference>
<dbReference type="SMR" id="A3D1T1"/>
<dbReference type="STRING" id="325240.Sbal_1176"/>
<dbReference type="KEGG" id="sbl:Sbal_1176"/>
<dbReference type="HOGENOM" id="CLU_031248_2_2_6"/>
<dbReference type="OrthoDB" id="9792278at2"/>
<dbReference type="UniPathway" id="UPA00904">
    <property type="reaction ID" value="UER00871"/>
</dbReference>
<dbReference type="Proteomes" id="UP000001557">
    <property type="component" value="Chromosome"/>
</dbReference>
<dbReference type="GO" id="GO:0005829">
    <property type="term" value="C:cytosol"/>
    <property type="evidence" value="ECO:0007669"/>
    <property type="project" value="TreeGrafter"/>
</dbReference>
<dbReference type="GO" id="GO:0008782">
    <property type="term" value="F:adenosylhomocysteine nucleosidase activity"/>
    <property type="evidence" value="ECO:0007669"/>
    <property type="project" value="UniProtKB-UniRule"/>
</dbReference>
<dbReference type="GO" id="GO:0008930">
    <property type="term" value="F:methylthioadenosine nucleosidase activity"/>
    <property type="evidence" value="ECO:0007669"/>
    <property type="project" value="UniProtKB-UniRule"/>
</dbReference>
<dbReference type="GO" id="GO:0019509">
    <property type="term" value="P:L-methionine salvage from methylthioadenosine"/>
    <property type="evidence" value="ECO:0007669"/>
    <property type="project" value="UniProtKB-UniRule"/>
</dbReference>
<dbReference type="GO" id="GO:0019284">
    <property type="term" value="P:L-methionine salvage from S-adenosylmethionine"/>
    <property type="evidence" value="ECO:0007669"/>
    <property type="project" value="TreeGrafter"/>
</dbReference>
<dbReference type="GO" id="GO:0009164">
    <property type="term" value="P:nucleoside catabolic process"/>
    <property type="evidence" value="ECO:0007669"/>
    <property type="project" value="InterPro"/>
</dbReference>
<dbReference type="CDD" id="cd09008">
    <property type="entry name" value="MTAN"/>
    <property type="match status" value="1"/>
</dbReference>
<dbReference type="FunFam" id="3.40.50.1580:FF:000001">
    <property type="entry name" value="MTA/SAH nucleosidase family protein"/>
    <property type="match status" value="1"/>
</dbReference>
<dbReference type="Gene3D" id="3.40.50.1580">
    <property type="entry name" value="Nucleoside phosphorylase domain"/>
    <property type="match status" value="1"/>
</dbReference>
<dbReference type="HAMAP" id="MF_01684">
    <property type="entry name" value="Salvage_MtnN"/>
    <property type="match status" value="1"/>
</dbReference>
<dbReference type="InterPro" id="IPR010049">
    <property type="entry name" value="MTA_SAH_Nsdase"/>
</dbReference>
<dbReference type="InterPro" id="IPR000845">
    <property type="entry name" value="Nucleoside_phosphorylase_d"/>
</dbReference>
<dbReference type="InterPro" id="IPR035994">
    <property type="entry name" value="Nucleoside_phosphorylase_sf"/>
</dbReference>
<dbReference type="NCBIfam" id="TIGR01704">
    <property type="entry name" value="MTA_SAH-Nsdase"/>
    <property type="match status" value="1"/>
</dbReference>
<dbReference type="NCBIfam" id="NF004079">
    <property type="entry name" value="PRK05584.1"/>
    <property type="match status" value="1"/>
</dbReference>
<dbReference type="PANTHER" id="PTHR46832">
    <property type="entry name" value="5'-METHYLTHIOADENOSINE/S-ADENOSYLHOMOCYSTEINE NUCLEOSIDASE"/>
    <property type="match status" value="1"/>
</dbReference>
<dbReference type="PANTHER" id="PTHR46832:SF1">
    <property type="entry name" value="5'-METHYLTHIOADENOSINE_S-ADENOSYLHOMOCYSTEINE NUCLEOSIDASE"/>
    <property type="match status" value="1"/>
</dbReference>
<dbReference type="Pfam" id="PF01048">
    <property type="entry name" value="PNP_UDP_1"/>
    <property type="match status" value="1"/>
</dbReference>
<dbReference type="SUPFAM" id="SSF53167">
    <property type="entry name" value="Purine and uridine phosphorylases"/>
    <property type="match status" value="1"/>
</dbReference>
<organism>
    <name type="scientific">Shewanella baltica (strain OS155 / ATCC BAA-1091)</name>
    <dbReference type="NCBI Taxonomy" id="325240"/>
    <lineage>
        <taxon>Bacteria</taxon>
        <taxon>Pseudomonadati</taxon>
        <taxon>Pseudomonadota</taxon>
        <taxon>Gammaproteobacteria</taxon>
        <taxon>Alteromonadales</taxon>
        <taxon>Shewanellaceae</taxon>
        <taxon>Shewanella</taxon>
    </lineage>
</organism>
<accession>A3D1T1</accession>
<comment type="function">
    <text evidence="1">Catalyzes the irreversible cleavage of the glycosidic bond in both 5'-methylthioadenosine (MTA) and S-adenosylhomocysteine (SAH/AdoHcy) to adenine and the corresponding thioribose, 5'-methylthioribose and S-ribosylhomocysteine, respectively. Also cleaves 5'-deoxyadenosine, a toxic by-product of radical S-adenosylmethionine (SAM) enzymes, into 5-deoxyribose and adenine.</text>
</comment>
<comment type="catalytic activity">
    <reaction evidence="1">
        <text>S-adenosyl-L-homocysteine + H2O = S-(5-deoxy-D-ribos-5-yl)-L-homocysteine + adenine</text>
        <dbReference type="Rhea" id="RHEA:17805"/>
        <dbReference type="ChEBI" id="CHEBI:15377"/>
        <dbReference type="ChEBI" id="CHEBI:16708"/>
        <dbReference type="ChEBI" id="CHEBI:57856"/>
        <dbReference type="ChEBI" id="CHEBI:58195"/>
        <dbReference type="EC" id="3.2.2.9"/>
    </reaction>
</comment>
<comment type="catalytic activity">
    <reaction evidence="1">
        <text>S-methyl-5'-thioadenosine + H2O = 5-(methylsulfanyl)-D-ribose + adenine</text>
        <dbReference type="Rhea" id="RHEA:13617"/>
        <dbReference type="ChEBI" id="CHEBI:15377"/>
        <dbReference type="ChEBI" id="CHEBI:16708"/>
        <dbReference type="ChEBI" id="CHEBI:17509"/>
        <dbReference type="ChEBI" id="CHEBI:78440"/>
        <dbReference type="EC" id="3.2.2.9"/>
    </reaction>
</comment>
<comment type="catalytic activity">
    <reaction evidence="1">
        <text>5'-deoxyadenosine + H2O = 5-deoxy-D-ribose + adenine</text>
        <dbReference type="Rhea" id="RHEA:29859"/>
        <dbReference type="ChEBI" id="CHEBI:15377"/>
        <dbReference type="ChEBI" id="CHEBI:16708"/>
        <dbReference type="ChEBI" id="CHEBI:17319"/>
        <dbReference type="ChEBI" id="CHEBI:149540"/>
        <dbReference type="EC" id="3.2.2.9"/>
    </reaction>
    <physiologicalReaction direction="left-to-right" evidence="1">
        <dbReference type="Rhea" id="RHEA:29860"/>
    </physiologicalReaction>
</comment>
<comment type="pathway">
    <text evidence="1">Amino-acid biosynthesis; L-methionine biosynthesis via salvage pathway; S-methyl-5-thio-alpha-D-ribose 1-phosphate from S-methyl-5'-thioadenosine (hydrolase route): step 1/2.</text>
</comment>
<comment type="similarity">
    <text evidence="1">Belongs to the PNP/UDP phosphorylase family. MtnN subfamily.</text>
</comment>